<protein>
    <recommendedName>
        <fullName>Coiled-coil domain-containing protein 91</fullName>
    </recommendedName>
    <alternativeName>
        <fullName>GGA-binding partner</fullName>
    </alternativeName>
</protein>
<gene>
    <name type="primary">Ccdc91</name>
    <name type="synonym">Ggabp</name>
</gene>
<comment type="function">
    <text evidence="3">Involved in the regulation of membrane traffic through the trans-Golgi network (TGN). Functions in close cooperation with the GGAs in the sorting of hydrolases to lysosomes.</text>
</comment>
<comment type="subunit">
    <text evidence="3">Homodimer. Interacts with GGA1, GGA2 and AP1G1.</text>
</comment>
<comment type="subcellular location">
    <subcellularLocation>
        <location evidence="3">Membrane</location>
        <topology evidence="3">Peripheral membrane protein</topology>
    </subcellularLocation>
    <subcellularLocation>
        <location evidence="3">Golgi apparatus</location>
        <location evidence="3">trans-Golgi network membrane</location>
        <topology evidence="3">Peripheral membrane protein</topology>
    </subcellularLocation>
    <subcellularLocation>
        <location evidence="3">Golgi apparatus</location>
        <location evidence="3">trans-Golgi network</location>
    </subcellularLocation>
    <text evidence="3">Colocalizes with GGA1, GGA2 and GGA3.</text>
</comment>
<comment type="alternative products">
    <event type="alternative splicing"/>
    <isoform>
        <id>Q9D8L5-1</id>
        <name>1</name>
        <sequence type="displayed"/>
    </isoform>
    <isoform>
        <id>Q9D8L5-2</id>
        <name>2</name>
        <sequence type="described" ref="VSP_013245 VSP_013246 VSP_013247"/>
    </isoform>
</comment>
<comment type="sequence caution" evidence="7">
    <conflict type="erroneous initiation">
        <sequence resource="EMBL-CDS" id="AAH24946"/>
    </conflict>
</comment>
<dbReference type="EMBL" id="AK007017">
    <property type="protein sequence ID" value="BAB24830.1"/>
    <property type="molecule type" value="mRNA"/>
</dbReference>
<dbReference type="EMBL" id="AK007917">
    <property type="protein sequence ID" value="BAB25348.2"/>
    <property type="molecule type" value="mRNA"/>
</dbReference>
<dbReference type="EMBL" id="BC024946">
    <property type="protein sequence ID" value="AAH24946.1"/>
    <property type="status" value="ALT_INIT"/>
    <property type="molecule type" value="mRNA"/>
</dbReference>
<dbReference type="EMBL" id="BC049073">
    <property type="protein sequence ID" value="AAH49073.1"/>
    <property type="molecule type" value="mRNA"/>
</dbReference>
<dbReference type="CCDS" id="CCDS20707.1">
    <molecule id="Q9D8L5-1"/>
</dbReference>
<dbReference type="RefSeq" id="NP_001342642.1">
    <molecule id="Q9D8L5-1"/>
    <property type="nucleotide sequence ID" value="NM_001355713.1"/>
</dbReference>
<dbReference type="RefSeq" id="NP_080187.2">
    <molecule id="Q9D8L5-1"/>
    <property type="nucleotide sequence ID" value="NM_025911.2"/>
</dbReference>
<dbReference type="RefSeq" id="XP_006507139.1">
    <molecule id="Q9D8L5-1"/>
    <property type="nucleotide sequence ID" value="XM_006507076.3"/>
</dbReference>
<dbReference type="RefSeq" id="XP_017177203.1">
    <property type="nucleotide sequence ID" value="XM_017321714.1"/>
</dbReference>
<dbReference type="RefSeq" id="XP_036008159.1">
    <molecule id="Q9D8L5-1"/>
    <property type="nucleotide sequence ID" value="XM_036152266.1"/>
</dbReference>
<dbReference type="RefSeq" id="XP_036008160.1">
    <molecule id="Q9D8L5-1"/>
    <property type="nucleotide sequence ID" value="XM_036152267.1"/>
</dbReference>
<dbReference type="SMR" id="Q9D8L5"/>
<dbReference type="BioGRID" id="211877">
    <property type="interactions" value="5"/>
</dbReference>
<dbReference type="FunCoup" id="Q9D8L5">
    <property type="interactions" value="1260"/>
</dbReference>
<dbReference type="MINT" id="Q9D8L5"/>
<dbReference type="STRING" id="10090.ENSMUSP00000032441"/>
<dbReference type="iPTMnet" id="Q9D8L5"/>
<dbReference type="PhosphoSitePlus" id="Q9D8L5"/>
<dbReference type="PaxDb" id="10090-ENSMUSP00000032441"/>
<dbReference type="PeptideAtlas" id="Q9D8L5"/>
<dbReference type="ProteomicsDB" id="265603">
    <molecule id="Q9D8L5-1"/>
</dbReference>
<dbReference type="ProteomicsDB" id="265604">
    <molecule id="Q9D8L5-2"/>
</dbReference>
<dbReference type="Pumba" id="Q9D8L5"/>
<dbReference type="Antibodypedia" id="24462">
    <property type="antibodies" value="109 antibodies from 17 providers"/>
</dbReference>
<dbReference type="DNASU" id="67015"/>
<dbReference type="Ensembl" id="ENSMUST00000032441.14">
    <molecule id="Q9D8L5-1"/>
    <property type="protein sequence ID" value="ENSMUSP00000032441.7"/>
    <property type="gene ID" value="ENSMUSG00000030301.18"/>
</dbReference>
<dbReference type="GeneID" id="67015"/>
<dbReference type="KEGG" id="mmu:67015"/>
<dbReference type="UCSC" id="uc009esy.1">
    <molecule id="Q9D8L5-1"/>
    <property type="organism name" value="mouse"/>
</dbReference>
<dbReference type="UCSC" id="uc009esz.1">
    <molecule id="Q9D8L5-2"/>
    <property type="organism name" value="mouse"/>
</dbReference>
<dbReference type="AGR" id="MGI:1914265"/>
<dbReference type="CTD" id="55297"/>
<dbReference type="MGI" id="MGI:1914265">
    <property type="gene designation" value="Ccdc91"/>
</dbReference>
<dbReference type="VEuPathDB" id="HostDB:ENSMUSG00000030301"/>
<dbReference type="eggNOG" id="ENOG502QW5U">
    <property type="taxonomic scope" value="Eukaryota"/>
</dbReference>
<dbReference type="GeneTree" id="ENSGT00390000015899"/>
<dbReference type="HOGENOM" id="CLU_050535_1_0_1"/>
<dbReference type="InParanoid" id="Q9D8L5"/>
<dbReference type="OMA" id="IQQSAHT"/>
<dbReference type="OrthoDB" id="6146069at2759"/>
<dbReference type="PhylomeDB" id="Q9D8L5"/>
<dbReference type="TreeFam" id="TF336441"/>
<dbReference type="BioGRID-ORCS" id="67015">
    <property type="hits" value="4 hits in 79 CRISPR screens"/>
</dbReference>
<dbReference type="ChiTaRS" id="Ccdc91">
    <property type="organism name" value="mouse"/>
</dbReference>
<dbReference type="PRO" id="PR:Q9D8L5"/>
<dbReference type="Proteomes" id="UP000000589">
    <property type="component" value="Chromosome 6"/>
</dbReference>
<dbReference type="RNAct" id="Q9D8L5">
    <property type="molecule type" value="protein"/>
</dbReference>
<dbReference type="Bgee" id="ENSMUSG00000030301">
    <property type="expression patterns" value="Expressed in seminiferous tubule of testis and 254 other cell types or tissues"/>
</dbReference>
<dbReference type="ExpressionAtlas" id="Q9D8L5">
    <property type="expression patterns" value="baseline and differential"/>
</dbReference>
<dbReference type="GO" id="GO:0005829">
    <property type="term" value="C:cytosol"/>
    <property type="evidence" value="ECO:0007669"/>
    <property type="project" value="GOC"/>
</dbReference>
<dbReference type="GO" id="GO:0016020">
    <property type="term" value="C:membrane"/>
    <property type="evidence" value="ECO:0007669"/>
    <property type="project" value="UniProtKB-SubCell"/>
</dbReference>
<dbReference type="GO" id="GO:0005654">
    <property type="term" value="C:nucleoplasm"/>
    <property type="evidence" value="ECO:0007669"/>
    <property type="project" value="Ensembl"/>
</dbReference>
<dbReference type="GO" id="GO:0005802">
    <property type="term" value="C:trans-Golgi network"/>
    <property type="evidence" value="ECO:0000250"/>
    <property type="project" value="UniProtKB"/>
</dbReference>
<dbReference type="GO" id="GO:0042802">
    <property type="term" value="F:identical protein binding"/>
    <property type="evidence" value="ECO:0000353"/>
    <property type="project" value="MGI"/>
</dbReference>
<dbReference type="GO" id="GO:0090160">
    <property type="term" value="P:Golgi to lysosome transport"/>
    <property type="evidence" value="ECO:0000250"/>
    <property type="project" value="UniProtKB"/>
</dbReference>
<dbReference type="GO" id="GO:0015031">
    <property type="term" value="P:protein transport"/>
    <property type="evidence" value="ECO:0007669"/>
    <property type="project" value="UniProtKB-KW"/>
</dbReference>
<dbReference type="InterPro" id="IPR034592">
    <property type="entry name" value="CCDC91"/>
</dbReference>
<dbReference type="PANTHER" id="PTHR35072">
    <property type="entry name" value="COILED-COIL DOMAIN-CONTAINING PROTEIN 91"/>
    <property type="match status" value="1"/>
</dbReference>
<dbReference type="PANTHER" id="PTHR35072:SF1">
    <property type="entry name" value="COILED-COIL DOMAIN-CONTAINING PROTEIN 91"/>
    <property type="match status" value="1"/>
</dbReference>
<accession>Q9D8L5</accession>
<accession>Q8R3N8</accession>
<accession>Q9D9E8</accession>
<feature type="chain" id="PRO_0000087479" description="Coiled-coil domain-containing protein 91">
    <location>
        <begin position="1"/>
        <end position="442"/>
    </location>
</feature>
<feature type="region of interest" description="Disordered" evidence="5">
    <location>
        <begin position="1"/>
        <end position="27"/>
    </location>
</feature>
<feature type="region of interest" description="GGA1-binding motif" evidence="1">
    <location>
        <begin position="1"/>
        <end position="16"/>
    </location>
</feature>
<feature type="region of interest" description="Disordered" evidence="5">
    <location>
        <begin position="48"/>
        <end position="80"/>
    </location>
</feature>
<feature type="region of interest" description="Disordered" evidence="5">
    <location>
        <begin position="114"/>
        <end position="134"/>
    </location>
</feature>
<feature type="region of interest" description="Homodimerization" evidence="1">
    <location>
        <begin position="211"/>
        <end position="414"/>
    </location>
</feature>
<feature type="coiled-coil region" evidence="4">
    <location>
        <begin position="130"/>
        <end position="210"/>
    </location>
</feature>
<feature type="coiled-coil region" evidence="4">
    <location>
        <begin position="253"/>
        <end position="318"/>
    </location>
</feature>
<feature type="coiled-coil region" evidence="4">
    <location>
        <begin position="346"/>
        <end position="408"/>
    </location>
</feature>
<feature type="modified residue" description="Phosphoserine" evidence="2">
    <location>
        <position position="43"/>
    </location>
</feature>
<feature type="modified residue" description="Phosphoserine" evidence="2">
    <location>
        <position position="46"/>
    </location>
</feature>
<feature type="splice variant" id="VSP_013245" description="In isoform 2." evidence="6">
    <original>MDDDDFGGFEAAETFDGEQGGNQAVSPAVPWATFPA</original>
    <variation>MPMWNK</variation>
    <location>
        <begin position="1"/>
        <end position="36"/>
    </location>
</feature>
<feature type="splice variant" id="VSP_013246" description="In isoform 2." evidence="6">
    <original>EKHKQELEDMRKAGHEA</original>
    <variation>VHGHLSHRCRPAPPPRV</variation>
    <location>
        <begin position="194"/>
        <end position="210"/>
    </location>
</feature>
<feature type="splice variant" id="VSP_013247" description="In isoform 2." evidence="6">
    <location>
        <begin position="211"/>
        <end position="442"/>
    </location>
</feature>
<feature type="sequence conflict" description="In Ref. 2; AAH24946." evidence="7" ref="2">
    <original>M</original>
    <variation>T</variation>
    <location>
        <position position="386"/>
    </location>
</feature>
<name>CCD91_MOUSE</name>
<sequence length="442" mass="50007">MDDDDFGGFEAAETFDGEQGGNQAVSPAVPWATFPAVSGVRLSPASPELILDHDHSSPSTGHLPPDAVISSADDTHADSSLMSQTISKAQIQQSAHTHLNIPLFPLGLTDEPSHGALALEDEPEGPGVHVSNSQLRQKISSLETKLKASEEEKQRIKKDVESLMEKHSVLEKGFLKEKEQDAVSFQARYRELQEKHKQELEDMRKAGHEALSIIVDEYKALLQSSVKQQLDAIEKQYVSAIEKQAHRCEELLHAQHQRLLDVLDTEKELLREKIQEALTQQSQEQKESLEKCLQEEMQRNKETLESAVKLEKEAMKDVITKAVGEERENLEKVHAEERELWKTEHARDQERVAEAIQAAVQEQQRMSQEAVKAAIVEEQRRSEKAMEEAVKRTRDELVEYVREQRRLDQVTRQRSLSSLELFLSCAQKQLSALIATEPVDIE</sequence>
<reference key="1">
    <citation type="journal article" date="2005" name="Science">
        <title>The transcriptional landscape of the mammalian genome.</title>
        <authorList>
            <person name="Carninci P."/>
            <person name="Kasukawa T."/>
            <person name="Katayama S."/>
            <person name="Gough J."/>
            <person name="Frith M.C."/>
            <person name="Maeda N."/>
            <person name="Oyama R."/>
            <person name="Ravasi T."/>
            <person name="Lenhard B."/>
            <person name="Wells C."/>
            <person name="Kodzius R."/>
            <person name="Shimokawa K."/>
            <person name="Bajic V.B."/>
            <person name="Brenner S.E."/>
            <person name="Batalov S."/>
            <person name="Forrest A.R."/>
            <person name="Zavolan M."/>
            <person name="Davis M.J."/>
            <person name="Wilming L.G."/>
            <person name="Aidinis V."/>
            <person name="Allen J.E."/>
            <person name="Ambesi-Impiombato A."/>
            <person name="Apweiler R."/>
            <person name="Aturaliya R.N."/>
            <person name="Bailey T.L."/>
            <person name="Bansal M."/>
            <person name="Baxter L."/>
            <person name="Beisel K.W."/>
            <person name="Bersano T."/>
            <person name="Bono H."/>
            <person name="Chalk A.M."/>
            <person name="Chiu K.P."/>
            <person name="Choudhary V."/>
            <person name="Christoffels A."/>
            <person name="Clutterbuck D.R."/>
            <person name="Crowe M.L."/>
            <person name="Dalla E."/>
            <person name="Dalrymple B.P."/>
            <person name="de Bono B."/>
            <person name="Della Gatta G."/>
            <person name="di Bernardo D."/>
            <person name="Down T."/>
            <person name="Engstrom P."/>
            <person name="Fagiolini M."/>
            <person name="Faulkner G."/>
            <person name="Fletcher C.F."/>
            <person name="Fukushima T."/>
            <person name="Furuno M."/>
            <person name="Futaki S."/>
            <person name="Gariboldi M."/>
            <person name="Georgii-Hemming P."/>
            <person name="Gingeras T.R."/>
            <person name="Gojobori T."/>
            <person name="Green R.E."/>
            <person name="Gustincich S."/>
            <person name="Harbers M."/>
            <person name="Hayashi Y."/>
            <person name="Hensch T.K."/>
            <person name="Hirokawa N."/>
            <person name="Hill D."/>
            <person name="Huminiecki L."/>
            <person name="Iacono M."/>
            <person name="Ikeo K."/>
            <person name="Iwama A."/>
            <person name="Ishikawa T."/>
            <person name="Jakt M."/>
            <person name="Kanapin A."/>
            <person name="Katoh M."/>
            <person name="Kawasawa Y."/>
            <person name="Kelso J."/>
            <person name="Kitamura H."/>
            <person name="Kitano H."/>
            <person name="Kollias G."/>
            <person name="Krishnan S.P."/>
            <person name="Kruger A."/>
            <person name="Kummerfeld S.K."/>
            <person name="Kurochkin I.V."/>
            <person name="Lareau L.F."/>
            <person name="Lazarevic D."/>
            <person name="Lipovich L."/>
            <person name="Liu J."/>
            <person name="Liuni S."/>
            <person name="McWilliam S."/>
            <person name="Madan Babu M."/>
            <person name="Madera M."/>
            <person name="Marchionni L."/>
            <person name="Matsuda H."/>
            <person name="Matsuzawa S."/>
            <person name="Miki H."/>
            <person name="Mignone F."/>
            <person name="Miyake S."/>
            <person name="Morris K."/>
            <person name="Mottagui-Tabar S."/>
            <person name="Mulder N."/>
            <person name="Nakano N."/>
            <person name="Nakauchi H."/>
            <person name="Ng P."/>
            <person name="Nilsson R."/>
            <person name="Nishiguchi S."/>
            <person name="Nishikawa S."/>
            <person name="Nori F."/>
            <person name="Ohara O."/>
            <person name="Okazaki Y."/>
            <person name="Orlando V."/>
            <person name="Pang K.C."/>
            <person name="Pavan W.J."/>
            <person name="Pavesi G."/>
            <person name="Pesole G."/>
            <person name="Petrovsky N."/>
            <person name="Piazza S."/>
            <person name="Reed J."/>
            <person name="Reid J.F."/>
            <person name="Ring B.Z."/>
            <person name="Ringwald M."/>
            <person name="Rost B."/>
            <person name="Ruan Y."/>
            <person name="Salzberg S.L."/>
            <person name="Sandelin A."/>
            <person name="Schneider C."/>
            <person name="Schoenbach C."/>
            <person name="Sekiguchi K."/>
            <person name="Semple C.A."/>
            <person name="Seno S."/>
            <person name="Sessa L."/>
            <person name="Sheng Y."/>
            <person name="Shibata Y."/>
            <person name="Shimada H."/>
            <person name="Shimada K."/>
            <person name="Silva D."/>
            <person name="Sinclair B."/>
            <person name="Sperling S."/>
            <person name="Stupka E."/>
            <person name="Sugiura K."/>
            <person name="Sultana R."/>
            <person name="Takenaka Y."/>
            <person name="Taki K."/>
            <person name="Tammoja K."/>
            <person name="Tan S.L."/>
            <person name="Tang S."/>
            <person name="Taylor M.S."/>
            <person name="Tegner J."/>
            <person name="Teichmann S.A."/>
            <person name="Ueda H.R."/>
            <person name="van Nimwegen E."/>
            <person name="Verardo R."/>
            <person name="Wei C.L."/>
            <person name="Yagi K."/>
            <person name="Yamanishi H."/>
            <person name="Zabarovsky E."/>
            <person name="Zhu S."/>
            <person name="Zimmer A."/>
            <person name="Hide W."/>
            <person name="Bult C."/>
            <person name="Grimmond S.M."/>
            <person name="Teasdale R.D."/>
            <person name="Liu E.T."/>
            <person name="Brusic V."/>
            <person name="Quackenbush J."/>
            <person name="Wahlestedt C."/>
            <person name="Mattick J.S."/>
            <person name="Hume D.A."/>
            <person name="Kai C."/>
            <person name="Sasaki D."/>
            <person name="Tomaru Y."/>
            <person name="Fukuda S."/>
            <person name="Kanamori-Katayama M."/>
            <person name="Suzuki M."/>
            <person name="Aoki J."/>
            <person name="Arakawa T."/>
            <person name="Iida J."/>
            <person name="Imamura K."/>
            <person name="Itoh M."/>
            <person name="Kato T."/>
            <person name="Kawaji H."/>
            <person name="Kawagashira N."/>
            <person name="Kawashima T."/>
            <person name="Kojima M."/>
            <person name="Kondo S."/>
            <person name="Konno H."/>
            <person name="Nakano K."/>
            <person name="Ninomiya N."/>
            <person name="Nishio T."/>
            <person name="Okada M."/>
            <person name="Plessy C."/>
            <person name="Shibata K."/>
            <person name="Shiraki T."/>
            <person name="Suzuki S."/>
            <person name="Tagami M."/>
            <person name="Waki K."/>
            <person name="Watahiki A."/>
            <person name="Okamura-Oho Y."/>
            <person name="Suzuki H."/>
            <person name="Kawai J."/>
            <person name="Hayashizaki Y."/>
        </authorList>
    </citation>
    <scope>NUCLEOTIDE SEQUENCE [LARGE SCALE MRNA] (ISOFORMS 1 AND 2)</scope>
    <source>
        <strain>C57BL/6J</strain>
        <tissue>Pancreas</tissue>
        <tissue>Testis</tissue>
    </source>
</reference>
<reference key="2">
    <citation type="journal article" date="2004" name="Genome Res.">
        <title>The status, quality, and expansion of the NIH full-length cDNA project: the Mammalian Gene Collection (MGC).</title>
        <authorList>
            <consortium name="The MGC Project Team"/>
        </authorList>
    </citation>
    <scope>NUCLEOTIDE SEQUENCE [LARGE SCALE MRNA] (ISOFORM 1)</scope>
    <source>
        <strain>C57BL/6J</strain>
        <strain>Czech II</strain>
        <tissue>Brain</tissue>
        <tissue>Mammary tumor</tissue>
    </source>
</reference>
<reference key="3">
    <citation type="journal article" date="2010" name="Cell">
        <title>A tissue-specific atlas of mouse protein phosphorylation and expression.</title>
        <authorList>
            <person name="Huttlin E.L."/>
            <person name="Jedrychowski M.P."/>
            <person name="Elias J.E."/>
            <person name="Goswami T."/>
            <person name="Rad R."/>
            <person name="Beausoleil S.A."/>
            <person name="Villen J."/>
            <person name="Haas W."/>
            <person name="Sowa M.E."/>
            <person name="Gygi S.P."/>
        </authorList>
    </citation>
    <scope>IDENTIFICATION BY MASS SPECTROMETRY [LARGE SCALE ANALYSIS]</scope>
    <source>
        <tissue>Brain</tissue>
        <tissue>Heart</tissue>
        <tissue>Kidney</tissue>
        <tissue>Lung</tissue>
        <tissue>Pancreas</tissue>
        <tissue>Testis</tissue>
    </source>
</reference>
<proteinExistence type="evidence at protein level"/>
<evidence type="ECO:0000250" key="1"/>
<evidence type="ECO:0000250" key="2">
    <source>
        <dbReference type="UniProtKB" id="Q6AY97"/>
    </source>
</evidence>
<evidence type="ECO:0000250" key="3">
    <source>
        <dbReference type="UniProtKB" id="Q7Z6B0"/>
    </source>
</evidence>
<evidence type="ECO:0000255" key="4"/>
<evidence type="ECO:0000256" key="5">
    <source>
        <dbReference type="SAM" id="MobiDB-lite"/>
    </source>
</evidence>
<evidence type="ECO:0000303" key="6">
    <source>
    </source>
</evidence>
<evidence type="ECO:0000305" key="7"/>
<organism>
    <name type="scientific">Mus musculus</name>
    <name type="common">Mouse</name>
    <dbReference type="NCBI Taxonomy" id="10090"/>
    <lineage>
        <taxon>Eukaryota</taxon>
        <taxon>Metazoa</taxon>
        <taxon>Chordata</taxon>
        <taxon>Craniata</taxon>
        <taxon>Vertebrata</taxon>
        <taxon>Euteleostomi</taxon>
        <taxon>Mammalia</taxon>
        <taxon>Eutheria</taxon>
        <taxon>Euarchontoglires</taxon>
        <taxon>Glires</taxon>
        <taxon>Rodentia</taxon>
        <taxon>Myomorpha</taxon>
        <taxon>Muroidea</taxon>
        <taxon>Muridae</taxon>
        <taxon>Murinae</taxon>
        <taxon>Mus</taxon>
        <taxon>Mus</taxon>
    </lineage>
</organism>
<keyword id="KW-0025">Alternative splicing</keyword>
<keyword id="KW-0175">Coiled coil</keyword>
<keyword id="KW-0333">Golgi apparatus</keyword>
<keyword id="KW-0472">Membrane</keyword>
<keyword id="KW-0597">Phosphoprotein</keyword>
<keyword id="KW-0653">Protein transport</keyword>
<keyword id="KW-1185">Reference proteome</keyword>
<keyword id="KW-0813">Transport</keyword>